<keyword id="KW-0158">Chromosome</keyword>
<keyword id="KW-0238">DNA-binding</keyword>
<keyword id="KW-0488">Methylation</keyword>
<keyword id="KW-0539">Nucleus</keyword>
<keyword id="KW-0597">Phosphoprotein</keyword>
<keyword id="KW-1185">Reference proteome</keyword>
<keyword id="KW-0804">Transcription</keyword>
<keyword id="KW-0805">Transcription regulation</keyword>
<accession>Q99PM1</accession>
<protein>
    <recommendedName>
        <fullName>TOX high mobility group box family member 4</fullName>
    </recommendedName>
    <alternativeName>
        <fullName evidence="6">Epidermal Langerhans cell protein LCP1</fullName>
    </alternativeName>
</protein>
<feature type="chain" id="PRO_0000048570" description="TOX high mobility group box family member 4">
    <location>
        <begin position="1"/>
        <end position="619"/>
    </location>
</feature>
<feature type="DNA-binding region" description="HMG box" evidence="4">
    <location>
        <begin position="223"/>
        <end position="291"/>
    </location>
</feature>
<feature type="region of interest" description="Disordered" evidence="5">
    <location>
        <begin position="155"/>
        <end position="227"/>
    </location>
</feature>
<feature type="region of interest" description="Disordered" evidence="5">
    <location>
        <begin position="304"/>
        <end position="335"/>
    </location>
</feature>
<feature type="region of interest" description="Disordered" evidence="5">
    <location>
        <begin position="436"/>
        <end position="458"/>
    </location>
</feature>
<feature type="short sequence motif" description="Nuclear localization signal" evidence="3">
    <location>
        <begin position="213"/>
        <end position="218"/>
    </location>
</feature>
<feature type="compositionally biased region" description="Basic and acidic residues" evidence="5">
    <location>
        <begin position="183"/>
        <end position="193"/>
    </location>
</feature>
<feature type="compositionally biased region" description="Basic residues" evidence="5">
    <location>
        <begin position="208"/>
        <end position="218"/>
    </location>
</feature>
<feature type="compositionally biased region" description="Low complexity" evidence="5">
    <location>
        <begin position="320"/>
        <end position="335"/>
    </location>
</feature>
<feature type="compositionally biased region" description="Pro residues" evidence="5">
    <location>
        <begin position="436"/>
        <end position="453"/>
    </location>
</feature>
<feature type="modified residue" description="Phosphothreonine" evidence="2">
    <location>
        <position position="176"/>
    </location>
</feature>
<feature type="modified residue" description="Phosphoserine" evidence="7">
    <location>
        <position position="178"/>
    </location>
</feature>
<feature type="modified residue" description="Phosphoserine" evidence="7">
    <location>
        <position position="182"/>
    </location>
</feature>
<feature type="modified residue" description="Phosphothreonine" evidence="1">
    <location>
        <position position="313"/>
    </location>
</feature>
<feature type="modified residue" description="Phosphoserine" evidence="1">
    <location>
        <position position="315"/>
    </location>
</feature>
<feature type="modified residue" description="Asymmetric dimethylarginine" evidence="1">
    <location>
        <position position="479"/>
    </location>
</feature>
<feature type="modified residue" description="Phosphoserine" evidence="1">
    <location>
        <position position="531"/>
    </location>
</feature>
<feature type="modified residue" description="Phosphoserine" evidence="1">
    <location>
        <position position="548"/>
    </location>
</feature>
<feature type="modified residue" description="Phosphoserine" evidence="1">
    <location>
        <position position="550"/>
    </location>
</feature>
<feature type="modified residue" description="Phosphoserine" evidence="1">
    <location>
        <position position="558"/>
    </location>
</feature>
<feature type="modified residue" description="Phosphoserine" evidence="1">
    <location>
        <position position="560"/>
    </location>
</feature>
<feature type="modified residue" description="Phosphoserine" evidence="1">
    <location>
        <position position="565"/>
    </location>
</feature>
<name>TOX4_RAT</name>
<comment type="function">
    <text evidence="1 2">Transcription factor that modulates cell fate reprogramming from the somatic state to the pluripotent and neuronal fate. In liver, controls the expression of hormone-regulated gluconeogenic genes such as G6PC1 and PCK1. This regulation is independent of the insulin receptor activation. Also acts as a regulatory component of protein phosphatase 1 (PP1) complexes. Component of the PNUTS-PP1 protein phosphatase complex, a PP1 complex that regulates RNA polymerase II transcription pause-release (By similarity). PNUTS-PP1 also plays a role in the control of chromatin structure and cell cycle progression during the transition from mitosis into interphase (By similarity).</text>
</comment>
<comment type="activity regulation">
    <text evidence="2">In liver, recruited to target gene promoters following treatment with dexamethasone and cAMP. Binding is decreased in presence of insulin.</text>
</comment>
<comment type="subunit">
    <text evidence="1 2">Component of the PNUTS-PP1 phosphatase complex, composed of PPP1R10/PNUTS, TOX4, WDR82 and PPP1CA or PPP1CB or PPP1CC. Interacts with PPP1R10/PNUTS (By similarity). Interacts with FOXO1 and CREB1 (increased by cAMP); FOXO1 and CREB1 are required for full induction of TOX4-dependent activity and the interactions are inhibited by insulin (By similarity).</text>
</comment>
<comment type="subcellular location">
    <subcellularLocation>
        <location evidence="2">Nucleus</location>
    </subcellularLocation>
    <subcellularLocation>
        <location evidence="2">Chromosome</location>
    </subcellularLocation>
    <text evidence="2">Associated with chromatin; colocalizes with RNA polymerase II (Pol II) on chromatin.</text>
</comment>
<gene>
    <name type="primary">Tox4</name>
</gene>
<proteinExistence type="evidence at protein level"/>
<organism>
    <name type="scientific">Rattus norvegicus</name>
    <name type="common">Rat</name>
    <dbReference type="NCBI Taxonomy" id="10116"/>
    <lineage>
        <taxon>Eukaryota</taxon>
        <taxon>Metazoa</taxon>
        <taxon>Chordata</taxon>
        <taxon>Craniata</taxon>
        <taxon>Vertebrata</taxon>
        <taxon>Euteleostomi</taxon>
        <taxon>Mammalia</taxon>
        <taxon>Eutheria</taxon>
        <taxon>Euarchontoglires</taxon>
        <taxon>Glires</taxon>
        <taxon>Rodentia</taxon>
        <taxon>Myomorpha</taxon>
        <taxon>Muroidea</taxon>
        <taxon>Muridae</taxon>
        <taxon>Murinae</taxon>
        <taxon>Rattus</taxon>
    </lineage>
</organism>
<reference key="1">
    <citation type="submission" date="2000-05" db="EMBL/GenBank/DDBJ databases">
        <title>Cloning of a novel gene expressed differentially in maturing epidermal Langerhans cells.</title>
        <authorList>
            <person name="Luy M.A."/>
            <person name="Koehler B.F."/>
            <person name="Demleitner K."/>
            <person name="Reske K."/>
        </authorList>
    </citation>
    <scope>NUCLEOTIDE SEQUENCE [MRNA]</scope>
    <source>
        <strain>LEW.AVN</strain>
        <tissue>Bone marrow macrophage</tissue>
    </source>
</reference>
<reference key="2">
    <citation type="journal article" date="2012" name="Nat. Commun.">
        <title>Quantitative maps of protein phosphorylation sites across 14 different rat organs and tissues.</title>
        <authorList>
            <person name="Lundby A."/>
            <person name="Secher A."/>
            <person name="Lage K."/>
            <person name="Nordsborg N.B."/>
            <person name="Dmytriyev A."/>
            <person name="Lundby C."/>
            <person name="Olsen J.V."/>
        </authorList>
    </citation>
    <scope>PHOSPHORYLATION [LARGE SCALE ANALYSIS] AT SER-178 AND SER-182</scope>
    <scope>IDENTIFICATION BY MASS SPECTROMETRY [LARGE SCALE ANALYSIS]</scope>
</reference>
<dbReference type="EMBL" id="AF267197">
    <property type="protein sequence ID" value="AAK00807.1"/>
    <property type="molecule type" value="mRNA"/>
</dbReference>
<dbReference type="SMR" id="Q99PM1"/>
<dbReference type="FunCoup" id="Q99PM1">
    <property type="interactions" value="3878"/>
</dbReference>
<dbReference type="STRING" id="10116.ENSRNOP00000017476"/>
<dbReference type="iPTMnet" id="Q99PM1"/>
<dbReference type="PhosphoSitePlus" id="Q99PM1"/>
<dbReference type="PaxDb" id="10116-ENSRNOP00000017476"/>
<dbReference type="UCSC" id="RGD:708449">
    <property type="organism name" value="rat"/>
</dbReference>
<dbReference type="AGR" id="RGD:708449"/>
<dbReference type="RGD" id="708449">
    <property type="gene designation" value="Tox4"/>
</dbReference>
<dbReference type="eggNOG" id="KOG0381">
    <property type="taxonomic scope" value="Eukaryota"/>
</dbReference>
<dbReference type="InParanoid" id="Q99PM1"/>
<dbReference type="PhylomeDB" id="Q99PM1"/>
<dbReference type="PRO" id="PR:Q99PM1"/>
<dbReference type="Proteomes" id="UP000002494">
    <property type="component" value="Unplaced"/>
</dbReference>
<dbReference type="GO" id="GO:0000785">
    <property type="term" value="C:chromatin"/>
    <property type="evidence" value="ECO:0000266"/>
    <property type="project" value="RGD"/>
</dbReference>
<dbReference type="GO" id="GO:0000781">
    <property type="term" value="C:chromosome, telomeric region"/>
    <property type="evidence" value="ECO:0000266"/>
    <property type="project" value="RGD"/>
</dbReference>
<dbReference type="GO" id="GO:0005634">
    <property type="term" value="C:nucleus"/>
    <property type="evidence" value="ECO:0000318"/>
    <property type="project" value="GO_Central"/>
</dbReference>
<dbReference type="GO" id="GO:0072357">
    <property type="term" value="C:PTW/PP1 phosphatase complex"/>
    <property type="evidence" value="ECO:0000250"/>
    <property type="project" value="UniProtKB"/>
</dbReference>
<dbReference type="GO" id="GO:0031490">
    <property type="term" value="F:chromatin DNA binding"/>
    <property type="evidence" value="ECO:0000318"/>
    <property type="project" value="GO_Central"/>
</dbReference>
<dbReference type="GO" id="GO:0032968">
    <property type="term" value="P:positive regulation of transcription elongation by RNA polymerase II"/>
    <property type="evidence" value="ECO:0000250"/>
    <property type="project" value="UniProtKB"/>
</dbReference>
<dbReference type="GO" id="GO:0006357">
    <property type="term" value="P:regulation of transcription by RNA polymerase II"/>
    <property type="evidence" value="ECO:0000318"/>
    <property type="project" value="GO_Central"/>
</dbReference>
<dbReference type="GO" id="GO:0001111">
    <property type="term" value="P:RNA polymerase II promoter clearance"/>
    <property type="evidence" value="ECO:0000250"/>
    <property type="project" value="UniProtKB"/>
</dbReference>
<dbReference type="CDD" id="cd21995">
    <property type="entry name" value="HMG-box_TOX-like"/>
    <property type="match status" value="1"/>
</dbReference>
<dbReference type="FunFam" id="1.10.30.10:FF:000005">
    <property type="entry name" value="TOX high mobility group box family member 3"/>
    <property type="match status" value="1"/>
</dbReference>
<dbReference type="Gene3D" id="1.10.30.10">
    <property type="entry name" value="High mobility group box domain"/>
    <property type="match status" value="1"/>
</dbReference>
<dbReference type="InterPro" id="IPR009071">
    <property type="entry name" value="HMG_box_dom"/>
</dbReference>
<dbReference type="InterPro" id="IPR036910">
    <property type="entry name" value="HMG_box_dom_sf"/>
</dbReference>
<dbReference type="InterPro" id="IPR051365">
    <property type="entry name" value="TOX_HMG-box_domain"/>
</dbReference>
<dbReference type="PANTHER" id="PTHR45781">
    <property type="entry name" value="AGAP000281-PA"/>
    <property type="match status" value="1"/>
</dbReference>
<dbReference type="PANTHER" id="PTHR45781:SF2">
    <property type="entry name" value="TOX HIGH MOBILITY GROUP BOX FAMILY MEMBER 4"/>
    <property type="match status" value="1"/>
</dbReference>
<dbReference type="Pfam" id="PF00505">
    <property type="entry name" value="HMG_box"/>
    <property type="match status" value="1"/>
</dbReference>
<dbReference type="PRINTS" id="PR00886">
    <property type="entry name" value="HIGHMOBLTY12"/>
</dbReference>
<dbReference type="SMART" id="SM00398">
    <property type="entry name" value="HMG"/>
    <property type="match status" value="1"/>
</dbReference>
<dbReference type="SUPFAM" id="SSF47095">
    <property type="entry name" value="HMG-box"/>
    <property type="match status" value="1"/>
</dbReference>
<dbReference type="PROSITE" id="PS50118">
    <property type="entry name" value="HMG_BOX_2"/>
    <property type="match status" value="1"/>
</dbReference>
<sequence>MEFPGGNDNYLTITGPSHPFLSGAETFHTPSLGDEEFEIPPISLDSDPSLAVSDVVAHFDDLADPSSSQDGSFSAQYGVQTLDMPVGMTHGLMEQGGGLLSGGLTMDLDHSIGTQYSANPPVTIDVPMTDMTSGLMGHSQLTTIDQSELSSQLGLSLGGGTILPPAQSPEDRLSTTPSPTNSLHEDGVDDFRRQLPAQKTVVVETGKKQKAPKKRKKKDPNEPQKPVSAYALFFRDTQAAIKGQNPNATFGEVSKIVASMWDSLGEEQKQVYKRKTEAAKKEYLKALAAYKDNQECQATVETVELDPVPQSQTPSPPPVTTADPASPAPASTESPALSPCIVVNSTLSSYVANQAFSGPGGQPNITKLIITKQMLPSSITMSQGGMVTVIPATVVTSRGLQLGQTSTATIQPSQQAQIATRSVLQAAAAAAASMQLPPPRLQPPPLQQMPQPPTQQQVTILQQPPPLQAMQQPPPQKVRINLQQQPPPLQSKIVPPPALKMQATVLPPTVESSPEQPMNSSPEAHTVEATSPETICEMIADVVPEVESPSQMDVELVSGSPVTLSPQPRCVRSGCENPPVISKDWDNEYCSNECVVKHCRDVFLAWVASRNPNSVVLVK</sequence>
<evidence type="ECO:0000250" key="1">
    <source>
        <dbReference type="UniProtKB" id="O94842"/>
    </source>
</evidence>
<evidence type="ECO:0000250" key="2">
    <source>
        <dbReference type="UniProtKB" id="Q8BU11"/>
    </source>
</evidence>
<evidence type="ECO:0000255" key="3"/>
<evidence type="ECO:0000255" key="4">
    <source>
        <dbReference type="PROSITE-ProRule" id="PRU00267"/>
    </source>
</evidence>
<evidence type="ECO:0000256" key="5">
    <source>
        <dbReference type="SAM" id="MobiDB-lite"/>
    </source>
</evidence>
<evidence type="ECO:0000303" key="6">
    <source ref="1"/>
</evidence>
<evidence type="ECO:0007744" key="7">
    <source>
    </source>
</evidence>